<dbReference type="EMBL" id="AB031549">
    <property type="protein sequence ID" value="BAA89543.1"/>
    <property type="molecule type" value="mRNA"/>
</dbReference>
<dbReference type="EMBL" id="AF071538">
    <property type="protein sequence ID" value="AAC95296.1"/>
    <property type="molecule type" value="mRNA"/>
</dbReference>
<dbReference type="EMBL" id="AK301543">
    <property type="protein sequence ID" value="BAG63040.1"/>
    <property type="molecule type" value="mRNA"/>
</dbReference>
<dbReference type="EMBL" id="BX255971">
    <property type="protein sequence ID" value="CAI23605.1"/>
    <property type="molecule type" value="Genomic_DNA"/>
</dbReference>
<dbReference type="EMBL" id="AL157372">
    <property type="protein sequence ID" value="CAI23605.1"/>
    <property type="status" value="JOINED"/>
    <property type="molecule type" value="Genomic_DNA"/>
</dbReference>
<dbReference type="EMBL" id="BX255972">
    <property type="status" value="NOT_ANNOTATED_CDS"/>
    <property type="molecule type" value="Genomic_DNA"/>
</dbReference>
<dbReference type="EMBL" id="BX255973">
    <property type="status" value="NOT_ANNOTATED_CDS"/>
    <property type="molecule type" value="Genomic_DNA"/>
</dbReference>
<dbReference type="EMBL" id="BC021299">
    <property type="protein sequence ID" value="AAH21299.1"/>
    <property type="molecule type" value="mRNA"/>
</dbReference>
<dbReference type="CCDS" id="CCDS4794.1">
    <molecule id="O95238-1"/>
</dbReference>
<dbReference type="CCDS" id="CCDS59013.1">
    <molecule id="O95238-2"/>
</dbReference>
<dbReference type="RefSeq" id="NP_001239223.1">
    <molecule id="O95238-2"/>
    <property type="nucleotide sequence ID" value="NM_001252294.2"/>
</dbReference>
<dbReference type="RefSeq" id="NP_036523.1">
    <molecule id="O95238-1"/>
    <property type="nucleotide sequence ID" value="NM_012391.3"/>
</dbReference>
<dbReference type="PDB" id="1YO5">
    <property type="method" value="X-ray"/>
    <property type="resolution" value="2.00 A"/>
    <property type="chains" value="C=247-335"/>
</dbReference>
<dbReference type="PDB" id="2DKX">
    <property type="method" value="NMR"/>
    <property type="chains" value="A=131-213"/>
</dbReference>
<dbReference type="PDBsum" id="1YO5"/>
<dbReference type="PDBsum" id="2DKX"/>
<dbReference type="SMR" id="O95238"/>
<dbReference type="BioGRID" id="117335">
    <property type="interactions" value="39"/>
</dbReference>
<dbReference type="CORUM" id="O95238"/>
<dbReference type="FunCoup" id="O95238">
    <property type="interactions" value="685"/>
</dbReference>
<dbReference type="IntAct" id="O95238">
    <property type="interactions" value="22"/>
</dbReference>
<dbReference type="STRING" id="9606.ENSP00000363149"/>
<dbReference type="GlyGen" id="O95238">
    <property type="glycosylation" value="1 site"/>
</dbReference>
<dbReference type="iPTMnet" id="O95238"/>
<dbReference type="PhosphoSitePlus" id="O95238"/>
<dbReference type="BioMuta" id="SPDEF"/>
<dbReference type="jPOST" id="O95238"/>
<dbReference type="MassIVE" id="O95238"/>
<dbReference type="PaxDb" id="9606-ENSP00000363149"/>
<dbReference type="PeptideAtlas" id="O95238"/>
<dbReference type="ProteomicsDB" id="27406"/>
<dbReference type="ProteomicsDB" id="50737">
    <molecule id="O95238-1"/>
</dbReference>
<dbReference type="Antibodypedia" id="15077">
    <property type="antibodies" value="210 antibodies from 30 providers"/>
</dbReference>
<dbReference type="DNASU" id="25803"/>
<dbReference type="Ensembl" id="ENST00000374037.8">
    <molecule id="O95238-1"/>
    <property type="protein sequence ID" value="ENSP00000363149.3"/>
    <property type="gene ID" value="ENSG00000124664.11"/>
</dbReference>
<dbReference type="Ensembl" id="ENST00000544425.2">
    <molecule id="O95238-2"/>
    <property type="protein sequence ID" value="ENSP00000442715.1"/>
    <property type="gene ID" value="ENSG00000124664.11"/>
</dbReference>
<dbReference type="GeneID" id="25803"/>
<dbReference type="KEGG" id="hsa:25803"/>
<dbReference type="MANE-Select" id="ENST00000374037.8">
    <property type="protein sequence ID" value="ENSP00000363149.3"/>
    <property type="RefSeq nucleotide sequence ID" value="NM_012391.3"/>
    <property type="RefSeq protein sequence ID" value="NP_036523.1"/>
</dbReference>
<dbReference type="UCSC" id="uc003ojq.3">
    <molecule id="O95238-1"/>
    <property type="organism name" value="human"/>
</dbReference>
<dbReference type="AGR" id="HGNC:17257"/>
<dbReference type="CTD" id="25803"/>
<dbReference type="DisGeNET" id="25803"/>
<dbReference type="GeneCards" id="SPDEF"/>
<dbReference type="HGNC" id="HGNC:17257">
    <property type="gene designation" value="SPDEF"/>
</dbReference>
<dbReference type="HPA" id="ENSG00000124664">
    <property type="expression patterns" value="Tissue enhanced (prostate, salivary gland)"/>
</dbReference>
<dbReference type="MIM" id="608144">
    <property type="type" value="gene"/>
</dbReference>
<dbReference type="neXtProt" id="NX_O95238"/>
<dbReference type="OpenTargets" id="ENSG00000124664"/>
<dbReference type="PharmGKB" id="PA134993886"/>
<dbReference type="VEuPathDB" id="HostDB:ENSG00000124664"/>
<dbReference type="eggNOG" id="KOG3805">
    <property type="taxonomic scope" value="Eukaryota"/>
</dbReference>
<dbReference type="GeneTree" id="ENSGT00940000157549"/>
<dbReference type="HOGENOM" id="CLU_877059_0_0_1"/>
<dbReference type="InParanoid" id="O95238"/>
<dbReference type="OMA" id="VHYCAST"/>
<dbReference type="OrthoDB" id="10057999at2759"/>
<dbReference type="PAN-GO" id="O95238">
    <property type="GO annotations" value="4 GO annotations based on evolutionary models"/>
</dbReference>
<dbReference type="PhylomeDB" id="O95238"/>
<dbReference type="TreeFam" id="TF318679"/>
<dbReference type="PathwayCommons" id="O95238"/>
<dbReference type="SignaLink" id="O95238"/>
<dbReference type="SIGNOR" id="O95238"/>
<dbReference type="BioGRID-ORCS" id="25803">
    <property type="hits" value="33 hits in 1169 CRISPR screens"/>
</dbReference>
<dbReference type="ChiTaRS" id="SPDEF">
    <property type="organism name" value="human"/>
</dbReference>
<dbReference type="EvolutionaryTrace" id="O95238"/>
<dbReference type="GeneWiki" id="SPDEF"/>
<dbReference type="GenomeRNAi" id="25803"/>
<dbReference type="Pharos" id="O95238">
    <property type="development level" value="Tbio"/>
</dbReference>
<dbReference type="PRO" id="PR:O95238"/>
<dbReference type="Proteomes" id="UP000005640">
    <property type="component" value="Chromosome 6"/>
</dbReference>
<dbReference type="RNAct" id="O95238">
    <property type="molecule type" value="protein"/>
</dbReference>
<dbReference type="Bgee" id="ENSG00000124664">
    <property type="expression patterns" value="Expressed in parotid gland and 129 other cell types or tissues"/>
</dbReference>
<dbReference type="GO" id="GO:0000785">
    <property type="term" value="C:chromatin"/>
    <property type="evidence" value="ECO:0000247"/>
    <property type="project" value="NTNU_SB"/>
</dbReference>
<dbReference type="GO" id="GO:0005634">
    <property type="term" value="C:nucleus"/>
    <property type="evidence" value="ECO:0000318"/>
    <property type="project" value="GO_Central"/>
</dbReference>
<dbReference type="GO" id="GO:0000981">
    <property type="term" value="F:DNA-binding transcription factor activity, RNA polymerase II-specific"/>
    <property type="evidence" value="ECO:0000247"/>
    <property type="project" value="NTNU_SB"/>
</dbReference>
<dbReference type="GO" id="GO:0043565">
    <property type="term" value="F:sequence-specific DNA binding"/>
    <property type="evidence" value="ECO:0000314"/>
    <property type="project" value="NTNU_SB"/>
</dbReference>
<dbReference type="GO" id="GO:1990837">
    <property type="term" value="F:sequence-specific double-stranded DNA binding"/>
    <property type="evidence" value="ECO:0000314"/>
    <property type="project" value="ARUK-UCL"/>
</dbReference>
<dbReference type="GO" id="GO:0030154">
    <property type="term" value="P:cell differentiation"/>
    <property type="evidence" value="ECO:0000318"/>
    <property type="project" value="GO_Central"/>
</dbReference>
<dbReference type="GO" id="GO:0072148">
    <property type="term" value="P:epithelial cell fate commitment"/>
    <property type="evidence" value="ECO:0007669"/>
    <property type="project" value="Ensembl"/>
</dbReference>
<dbReference type="GO" id="GO:0002068">
    <property type="term" value="P:glandular epithelial cell development"/>
    <property type="evidence" value="ECO:0007669"/>
    <property type="project" value="Ensembl"/>
</dbReference>
<dbReference type="GO" id="GO:0060576">
    <property type="term" value="P:intestinal epithelial cell development"/>
    <property type="evidence" value="ECO:0007669"/>
    <property type="project" value="Ensembl"/>
</dbReference>
<dbReference type="GO" id="GO:0060480">
    <property type="term" value="P:lung goblet cell differentiation"/>
    <property type="evidence" value="ECO:0007669"/>
    <property type="project" value="Ensembl"/>
</dbReference>
<dbReference type="GO" id="GO:0010454">
    <property type="term" value="P:negative regulation of cell fate commitment"/>
    <property type="evidence" value="ECO:0007669"/>
    <property type="project" value="Ensembl"/>
</dbReference>
<dbReference type="GO" id="GO:0000122">
    <property type="term" value="P:negative regulation of transcription by RNA polymerase II"/>
    <property type="evidence" value="ECO:0000314"/>
    <property type="project" value="BHF-UCL"/>
</dbReference>
<dbReference type="GO" id="GO:0043065">
    <property type="term" value="P:positive regulation of apoptotic process"/>
    <property type="evidence" value="ECO:0000314"/>
    <property type="project" value="BHF-UCL"/>
</dbReference>
<dbReference type="GO" id="GO:0010455">
    <property type="term" value="P:positive regulation of cell fate commitment"/>
    <property type="evidence" value="ECO:0007669"/>
    <property type="project" value="Ensembl"/>
</dbReference>
<dbReference type="GO" id="GO:0045944">
    <property type="term" value="P:positive regulation of transcription by RNA polymerase II"/>
    <property type="evidence" value="ECO:0007669"/>
    <property type="project" value="Ensembl"/>
</dbReference>
<dbReference type="GO" id="GO:0006357">
    <property type="term" value="P:regulation of transcription by RNA polymerase II"/>
    <property type="evidence" value="ECO:0000318"/>
    <property type="project" value="GO_Central"/>
</dbReference>
<dbReference type="GO" id="GO:0006366">
    <property type="term" value="P:transcription by RNA polymerase II"/>
    <property type="evidence" value="ECO:0007669"/>
    <property type="project" value="Ensembl"/>
</dbReference>
<dbReference type="CDD" id="cd08532">
    <property type="entry name" value="SAM_PNT-PDEF-like"/>
    <property type="match status" value="1"/>
</dbReference>
<dbReference type="FunFam" id="1.10.150.50:FF:000050">
    <property type="entry name" value="SAM pointed domain containing ETS transcription factor"/>
    <property type="match status" value="1"/>
</dbReference>
<dbReference type="FunFam" id="1.10.10.10:FF:000220">
    <property type="entry name" value="SAM pointed domain-containing Ets transcription factor"/>
    <property type="match status" value="1"/>
</dbReference>
<dbReference type="Gene3D" id="1.10.150.50">
    <property type="entry name" value="Transcription Factor, Ets-1"/>
    <property type="match status" value="1"/>
</dbReference>
<dbReference type="Gene3D" id="1.10.10.10">
    <property type="entry name" value="Winged helix-like DNA-binding domain superfamily/Winged helix DNA-binding domain"/>
    <property type="match status" value="1"/>
</dbReference>
<dbReference type="InterPro" id="IPR000418">
    <property type="entry name" value="Ets_dom"/>
</dbReference>
<dbReference type="InterPro" id="IPR046328">
    <property type="entry name" value="ETS_fam"/>
</dbReference>
<dbReference type="InterPro" id="IPR003118">
    <property type="entry name" value="Pointed_dom"/>
</dbReference>
<dbReference type="InterPro" id="IPR013761">
    <property type="entry name" value="SAM/pointed_sf"/>
</dbReference>
<dbReference type="InterPro" id="IPR036388">
    <property type="entry name" value="WH-like_DNA-bd_sf"/>
</dbReference>
<dbReference type="InterPro" id="IPR036390">
    <property type="entry name" value="WH_DNA-bd_sf"/>
</dbReference>
<dbReference type="PANTHER" id="PTHR11849">
    <property type="entry name" value="ETS"/>
    <property type="match status" value="1"/>
</dbReference>
<dbReference type="PANTHER" id="PTHR11849:SF182">
    <property type="entry name" value="SAM POINTED DOMAIN-CONTAINING ETS TRANSCRIPTION FACTOR"/>
    <property type="match status" value="1"/>
</dbReference>
<dbReference type="Pfam" id="PF00178">
    <property type="entry name" value="Ets"/>
    <property type="match status" value="1"/>
</dbReference>
<dbReference type="Pfam" id="PF02198">
    <property type="entry name" value="SAM_PNT"/>
    <property type="match status" value="1"/>
</dbReference>
<dbReference type="PRINTS" id="PR00454">
    <property type="entry name" value="ETSDOMAIN"/>
</dbReference>
<dbReference type="SMART" id="SM00413">
    <property type="entry name" value="ETS"/>
    <property type="match status" value="1"/>
</dbReference>
<dbReference type="SMART" id="SM00251">
    <property type="entry name" value="SAM_PNT"/>
    <property type="match status" value="1"/>
</dbReference>
<dbReference type="SUPFAM" id="SSF47769">
    <property type="entry name" value="SAM/Pointed domain"/>
    <property type="match status" value="1"/>
</dbReference>
<dbReference type="SUPFAM" id="SSF46785">
    <property type="entry name" value="Winged helix' DNA-binding domain"/>
    <property type="match status" value="1"/>
</dbReference>
<dbReference type="PROSITE" id="PS00345">
    <property type="entry name" value="ETS_DOMAIN_1"/>
    <property type="match status" value="1"/>
</dbReference>
<dbReference type="PROSITE" id="PS00346">
    <property type="entry name" value="ETS_DOMAIN_2"/>
    <property type="match status" value="1"/>
</dbReference>
<dbReference type="PROSITE" id="PS50061">
    <property type="entry name" value="ETS_DOMAIN_3"/>
    <property type="match status" value="1"/>
</dbReference>
<dbReference type="PROSITE" id="PS51433">
    <property type="entry name" value="PNT"/>
    <property type="match status" value="1"/>
</dbReference>
<sequence length="335" mass="37518">MGSASPGLSSVSPSHLLLPPDTVSRTGLEKAAAGAVGLERRDWSPSPPATPEQGLSAFYLSYFDMLYPEDSSWAAKAPGASSREEPPEEPEQCPVIDSQAPAGSLDLVPGGLTLEEHSLEQVQSMVVGEVLKDIETACKLLNITADPMDWSPSNVQKWLLWTEHQYRLPPMGKAFQELAGKELCAMSEEQFRQRSPLGGDVLHAHLDIWKSAAWMKERTSPGAIHYCASTSEESWTDSEVDSSCSGQPIHLWQFLKELLLKPHSYGRFIRWLNKEKGIFKIEDSAQVARLWGIRKNRPAMNYDKLSRSIRQYYKKGIIRKPDISQRLVYQFVHPI</sequence>
<keyword id="KW-0002">3D-structure</keyword>
<keyword id="KW-0010">Activator</keyword>
<keyword id="KW-0025">Alternative splicing</keyword>
<keyword id="KW-0238">DNA-binding</keyword>
<keyword id="KW-0539">Nucleus</keyword>
<keyword id="KW-1267">Proteomics identification</keyword>
<keyword id="KW-1185">Reference proteome</keyword>
<keyword id="KW-0804">Transcription</keyword>
<keyword id="KW-0805">Transcription regulation</keyword>
<name>SPDEF_HUMAN</name>
<organism>
    <name type="scientific">Homo sapiens</name>
    <name type="common">Human</name>
    <dbReference type="NCBI Taxonomy" id="9606"/>
    <lineage>
        <taxon>Eukaryota</taxon>
        <taxon>Metazoa</taxon>
        <taxon>Chordata</taxon>
        <taxon>Craniata</taxon>
        <taxon>Vertebrata</taxon>
        <taxon>Euteleostomi</taxon>
        <taxon>Mammalia</taxon>
        <taxon>Eutheria</taxon>
        <taxon>Euarchontoglires</taxon>
        <taxon>Primates</taxon>
        <taxon>Haplorrhini</taxon>
        <taxon>Catarrhini</taxon>
        <taxon>Hominidae</taxon>
        <taxon>Homo</taxon>
    </lineage>
</organism>
<comment type="function">
    <text evidence="4">May function as an androgen-independent transactivator of the prostate-specific antigen (PSA) promoter. Binds to 5'-GGAT-3' DNA sequences. May play a role in the regulation of the prostate gland and/or prostate cancer development. Acts as a transcriptional activator for SERPINB5 promoter.</text>
</comment>
<comment type="subunit">
    <text evidence="4 5 6">Interacts with the DNA-binding domain of the androgen receptor. Interacts with NKX3-1.</text>
</comment>
<comment type="interaction">
    <interactant intactId="EBI-12811275">
        <id>O95238</id>
    </interactant>
    <interactant intactId="EBI-2837444">
        <id>Q8WUW1</id>
        <label>BRK1</label>
    </interactant>
    <organismsDiffer>false</organismsDiffer>
    <experiments>3</experiments>
</comment>
<comment type="interaction">
    <interactant intactId="EBI-12811275">
        <id>O95238</id>
    </interactant>
    <interactant intactId="EBI-11752486">
        <id>Q86XR8-3</id>
        <label>CEP57</label>
    </interactant>
    <organismsDiffer>false</organismsDiffer>
    <experiments>3</experiments>
</comment>
<comment type="interaction">
    <interactant intactId="EBI-12811275">
        <id>O95238</id>
    </interactant>
    <interactant intactId="EBI-715032">
        <id>P20674</id>
        <label>COX5A</label>
    </interactant>
    <organismsDiffer>false</organismsDiffer>
    <experiments>3</experiments>
</comment>
<comment type="interaction">
    <interactant intactId="EBI-12811275">
        <id>O95238</id>
    </interactant>
    <interactant intactId="EBI-744099">
        <id>Q9H0I2</id>
        <label>ENKD1</label>
    </interactant>
    <organismsDiffer>false</organismsDiffer>
    <experiments>3</experiments>
</comment>
<comment type="interaction">
    <interactant intactId="EBI-12811275">
        <id>O95238</id>
    </interactant>
    <interactant intactId="EBI-7225287">
        <id>Q96MY7</id>
        <label>FAM161B</label>
    </interactant>
    <organismsDiffer>false</organismsDiffer>
    <experiments>3</experiments>
</comment>
<comment type="interaction">
    <interactant intactId="EBI-12811275">
        <id>O95238</id>
    </interactant>
    <interactant intactId="EBI-359352">
        <id>P25786</id>
        <label>PSMA1</label>
    </interactant>
    <organismsDiffer>false</organismsDiffer>
    <experiments>3</experiments>
</comment>
<comment type="interaction">
    <interactant intactId="EBI-12811275">
        <id>O95238</id>
    </interactant>
    <interactant intactId="EBI-12336127">
        <id>Q7Z614-3</id>
        <label>SNX20</label>
    </interactant>
    <organismsDiffer>false</organismsDiffer>
    <experiments>3</experiments>
</comment>
<comment type="interaction">
    <interactant intactId="EBI-12811275">
        <id>O95238</id>
    </interactant>
    <interactant intactId="EBI-9090990">
        <id>Q5W5X9-3</id>
        <label>TTC23</label>
    </interactant>
    <organismsDiffer>false</organismsDiffer>
    <experiments>3</experiments>
</comment>
<comment type="subcellular location">
    <subcellularLocation>
        <location evidence="8">Nucleus</location>
    </subcellularLocation>
</comment>
<comment type="alternative products">
    <event type="alternative splicing"/>
    <isoform>
        <id>O95238-1</id>
        <name>1</name>
        <sequence type="displayed"/>
    </isoform>
    <isoform>
        <id>O95238-2</id>
        <name>2</name>
        <sequence type="described" ref="VSP_044722"/>
    </isoform>
</comment>
<comment type="tissue specificity">
    <text evidence="4">Expressed in a very restricted set of primarily hormone-regulated epithelial tissues with particularly high expression in the prostate gland. Significantly lower expression is seen in other hormone regulated tissues such as mammary gland, salivary gland, and ovary. Expressed in prostate carcinoma cells.</text>
</comment>
<comment type="similarity">
    <text evidence="8">Belongs to the ETS family.</text>
</comment>
<feature type="chain" id="PRO_0000223958" description="SAM pointed domain-containing Ets transcription factor">
    <location>
        <begin position="1"/>
        <end position="335"/>
    </location>
</feature>
<feature type="domain" description="PNT" evidence="2">
    <location>
        <begin position="129"/>
        <end position="213"/>
    </location>
</feature>
<feature type="DNA-binding region" description="ETS" evidence="1">
    <location>
        <begin position="249"/>
        <end position="332"/>
    </location>
</feature>
<feature type="region of interest" description="Disordered" evidence="3">
    <location>
        <begin position="1"/>
        <end position="25"/>
    </location>
</feature>
<feature type="region of interest" description="Disordered" evidence="3">
    <location>
        <begin position="75"/>
        <end position="100"/>
    </location>
</feature>
<feature type="compositionally biased region" description="Low complexity" evidence="3">
    <location>
        <begin position="1"/>
        <end position="20"/>
    </location>
</feature>
<feature type="splice variant" id="VSP_044722" description="In isoform 2." evidence="7">
    <location>
        <begin position="212"/>
        <end position="227"/>
    </location>
</feature>
<feature type="sequence variant" id="VAR_048955" description="In dbSNP:rs2233639.">
    <original>A</original>
    <variation>T</variation>
    <location>
        <position position="57"/>
    </location>
</feature>
<feature type="sequence conflict" description="In Ref. 3; BAG63040." evidence="8" ref="3">
    <original>A</original>
    <variation>G</variation>
    <location>
        <position position="49"/>
    </location>
</feature>
<feature type="sequence conflict" description="In Ref. 3; BAG63040." evidence="8" ref="3">
    <original>K</original>
    <variation>N</variation>
    <location>
        <position position="76"/>
    </location>
</feature>
<feature type="helix" evidence="10">
    <location>
        <begin position="132"/>
        <end position="139"/>
    </location>
</feature>
<feature type="turn" evidence="10">
    <location>
        <begin position="140"/>
        <end position="142"/>
    </location>
</feature>
<feature type="helix" evidence="10">
    <location>
        <begin position="147"/>
        <end position="149"/>
    </location>
</feature>
<feature type="helix" evidence="10">
    <location>
        <begin position="155"/>
        <end position="165"/>
    </location>
</feature>
<feature type="helix" evidence="10">
    <location>
        <begin position="172"/>
        <end position="175"/>
    </location>
</feature>
<feature type="helix" evidence="10">
    <location>
        <begin position="180"/>
        <end position="185"/>
    </location>
</feature>
<feature type="helix" evidence="10">
    <location>
        <begin position="188"/>
        <end position="194"/>
    </location>
</feature>
<feature type="strand" evidence="10">
    <location>
        <begin position="196"/>
        <end position="198"/>
    </location>
</feature>
<feature type="helix" evidence="10">
    <location>
        <begin position="200"/>
        <end position="213"/>
    </location>
</feature>
<feature type="helix" evidence="9">
    <location>
        <begin position="251"/>
        <end position="260"/>
    </location>
</feature>
<feature type="helix" evidence="9">
    <location>
        <begin position="262"/>
        <end position="265"/>
    </location>
</feature>
<feature type="turn" evidence="9">
    <location>
        <begin position="266"/>
        <end position="268"/>
    </location>
</feature>
<feature type="strand" evidence="9">
    <location>
        <begin position="269"/>
        <end position="273"/>
    </location>
</feature>
<feature type="turn" evidence="9">
    <location>
        <begin position="274"/>
        <end position="277"/>
    </location>
</feature>
<feature type="strand" evidence="9">
    <location>
        <begin position="278"/>
        <end position="282"/>
    </location>
</feature>
<feature type="helix" evidence="9">
    <location>
        <begin position="284"/>
        <end position="295"/>
    </location>
</feature>
<feature type="helix" evidence="9">
    <location>
        <begin position="302"/>
        <end position="311"/>
    </location>
</feature>
<feature type="turn" evidence="9">
    <location>
        <begin position="312"/>
        <end position="316"/>
    </location>
</feature>
<feature type="strand" evidence="9">
    <location>
        <begin position="317"/>
        <end position="319"/>
    </location>
</feature>
<feature type="strand" evidence="9">
    <location>
        <begin position="328"/>
        <end position="332"/>
    </location>
</feature>
<evidence type="ECO:0000255" key="1">
    <source>
        <dbReference type="PROSITE-ProRule" id="PRU00237"/>
    </source>
</evidence>
<evidence type="ECO:0000255" key="2">
    <source>
        <dbReference type="PROSITE-ProRule" id="PRU00762"/>
    </source>
</evidence>
<evidence type="ECO:0000256" key="3">
    <source>
        <dbReference type="SAM" id="MobiDB-lite"/>
    </source>
</evidence>
<evidence type="ECO:0000269" key="4">
    <source>
    </source>
</evidence>
<evidence type="ECO:0000269" key="5">
    <source>
    </source>
</evidence>
<evidence type="ECO:0000269" key="6">
    <source>
    </source>
</evidence>
<evidence type="ECO:0000303" key="7">
    <source>
    </source>
</evidence>
<evidence type="ECO:0000305" key="8"/>
<evidence type="ECO:0007829" key="9">
    <source>
        <dbReference type="PDB" id="1YO5"/>
    </source>
</evidence>
<evidence type="ECO:0007829" key="10">
    <source>
        <dbReference type="PDB" id="2DKX"/>
    </source>
</evidence>
<protein>
    <recommendedName>
        <fullName>SAM pointed domain-containing Ets transcription factor</fullName>
    </recommendedName>
    <alternativeName>
        <fullName>Prostate epithelium-specific Ets transcription factor</fullName>
        <shortName>Prostate-specific Ets</shortName>
    </alternativeName>
    <alternativeName>
        <fullName>Prostate-derived Ets factor</fullName>
    </alternativeName>
</protein>
<proteinExistence type="evidence at protein level"/>
<reference key="1">
    <citation type="journal article" date="2000" name="Gene">
        <title>Cloning and expression of the mouse Pse gene encoding a novel Ets family member.</title>
        <authorList>
            <person name="Yamada N."/>
            <person name="Tamai Y."/>
            <person name="Miyamoto H."/>
            <person name="Nozaki M."/>
        </authorList>
    </citation>
    <scope>NUCLEOTIDE SEQUENCE [MRNA] (ISOFORM 1)</scope>
    <source>
        <tissue>Prostatic carcinoma</tissue>
    </source>
</reference>
<reference key="2">
    <citation type="journal article" date="2000" name="J. Biol. Chem.">
        <title>PDEF, a novel prostate epithelium-specific ets transcription factor, interacts with the androgen receptor and activates prostate-specific antigen gene expression.</title>
        <authorList>
            <person name="Oettgen P."/>
            <person name="Finger E."/>
            <person name="Sun Z."/>
            <person name="Akbarali Y."/>
            <person name="Thamrongsak U."/>
            <person name="Boltax J."/>
            <person name="Grall F."/>
            <person name="Dube A."/>
            <person name="Weiss A."/>
            <person name="Brown L."/>
            <person name="Quinn G."/>
            <person name="Kas K."/>
            <person name="Endress G."/>
            <person name="Kunsch C."/>
            <person name="Libermann T.A."/>
        </authorList>
    </citation>
    <scope>NUCLEOTIDE SEQUENCE [MRNA] (ISOFORM 1)</scope>
    <scope>FUNCTION</scope>
    <scope>TISSUE SPECIFICITY</scope>
    <scope>INTERACTION WITH AR</scope>
    <source>
        <tissue>Prostate</tissue>
    </source>
</reference>
<reference key="3">
    <citation type="journal article" date="2004" name="Nat. Genet.">
        <title>Complete sequencing and characterization of 21,243 full-length human cDNAs.</title>
        <authorList>
            <person name="Ota T."/>
            <person name="Suzuki Y."/>
            <person name="Nishikawa T."/>
            <person name="Otsuki T."/>
            <person name="Sugiyama T."/>
            <person name="Irie R."/>
            <person name="Wakamatsu A."/>
            <person name="Hayashi K."/>
            <person name="Sato H."/>
            <person name="Nagai K."/>
            <person name="Kimura K."/>
            <person name="Makita H."/>
            <person name="Sekine M."/>
            <person name="Obayashi M."/>
            <person name="Nishi T."/>
            <person name="Shibahara T."/>
            <person name="Tanaka T."/>
            <person name="Ishii S."/>
            <person name="Yamamoto J."/>
            <person name="Saito K."/>
            <person name="Kawai Y."/>
            <person name="Isono Y."/>
            <person name="Nakamura Y."/>
            <person name="Nagahari K."/>
            <person name="Murakami K."/>
            <person name="Yasuda T."/>
            <person name="Iwayanagi T."/>
            <person name="Wagatsuma M."/>
            <person name="Shiratori A."/>
            <person name="Sudo H."/>
            <person name="Hosoiri T."/>
            <person name="Kaku Y."/>
            <person name="Kodaira H."/>
            <person name="Kondo H."/>
            <person name="Sugawara M."/>
            <person name="Takahashi M."/>
            <person name="Kanda K."/>
            <person name="Yokoi T."/>
            <person name="Furuya T."/>
            <person name="Kikkawa E."/>
            <person name="Omura Y."/>
            <person name="Abe K."/>
            <person name="Kamihara K."/>
            <person name="Katsuta N."/>
            <person name="Sato K."/>
            <person name="Tanikawa M."/>
            <person name="Yamazaki M."/>
            <person name="Ninomiya K."/>
            <person name="Ishibashi T."/>
            <person name="Yamashita H."/>
            <person name="Murakawa K."/>
            <person name="Fujimori K."/>
            <person name="Tanai H."/>
            <person name="Kimata M."/>
            <person name="Watanabe M."/>
            <person name="Hiraoka S."/>
            <person name="Chiba Y."/>
            <person name="Ishida S."/>
            <person name="Ono Y."/>
            <person name="Takiguchi S."/>
            <person name="Watanabe S."/>
            <person name="Yosida M."/>
            <person name="Hotuta T."/>
            <person name="Kusano J."/>
            <person name="Kanehori K."/>
            <person name="Takahashi-Fujii A."/>
            <person name="Hara H."/>
            <person name="Tanase T.-O."/>
            <person name="Nomura Y."/>
            <person name="Togiya S."/>
            <person name="Komai F."/>
            <person name="Hara R."/>
            <person name="Takeuchi K."/>
            <person name="Arita M."/>
            <person name="Imose N."/>
            <person name="Musashino K."/>
            <person name="Yuuki H."/>
            <person name="Oshima A."/>
            <person name="Sasaki N."/>
            <person name="Aotsuka S."/>
            <person name="Yoshikawa Y."/>
            <person name="Matsunawa H."/>
            <person name="Ichihara T."/>
            <person name="Shiohata N."/>
            <person name="Sano S."/>
            <person name="Moriya S."/>
            <person name="Momiyama H."/>
            <person name="Satoh N."/>
            <person name="Takami S."/>
            <person name="Terashima Y."/>
            <person name="Suzuki O."/>
            <person name="Nakagawa S."/>
            <person name="Senoh A."/>
            <person name="Mizoguchi H."/>
            <person name="Goto Y."/>
            <person name="Shimizu F."/>
            <person name="Wakebe H."/>
            <person name="Hishigaki H."/>
            <person name="Watanabe T."/>
            <person name="Sugiyama A."/>
            <person name="Takemoto M."/>
            <person name="Kawakami B."/>
            <person name="Yamazaki M."/>
            <person name="Watanabe K."/>
            <person name="Kumagai A."/>
            <person name="Itakura S."/>
            <person name="Fukuzumi Y."/>
            <person name="Fujimori Y."/>
            <person name="Komiyama M."/>
            <person name="Tashiro H."/>
            <person name="Tanigami A."/>
            <person name="Fujiwara T."/>
            <person name="Ono T."/>
            <person name="Yamada K."/>
            <person name="Fujii Y."/>
            <person name="Ozaki K."/>
            <person name="Hirao M."/>
            <person name="Ohmori Y."/>
            <person name="Kawabata A."/>
            <person name="Hikiji T."/>
            <person name="Kobatake N."/>
            <person name="Inagaki H."/>
            <person name="Ikema Y."/>
            <person name="Okamoto S."/>
            <person name="Okitani R."/>
            <person name="Kawakami T."/>
            <person name="Noguchi S."/>
            <person name="Itoh T."/>
            <person name="Shigeta K."/>
            <person name="Senba T."/>
            <person name="Matsumura K."/>
            <person name="Nakajima Y."/>
            <person name="Mizuno T."/>
            <person name="Morinaga M."/>
            <person name="Sasaki M."/>
            <person name="Togashi T."/>
            <person name="Oyama M."/>
            <person name="Hata H."/>
            <person name="Watanabe M."/>
            <person name="Komatsu T."/>
            <person name="Mizushima-Sugano J."/>
            <person name="Satoh T."/>
            <person name="Shirai Y."/>
            <person name="Takahashi Y."/>
            <person name="Nakagawa K."/>
            <person name="Okumura K."/>
            <person name="Nagase T."/>
            <person name="Nomura N."/>
            <person name="Kikuchi H."/>
            <person name="Masuho Y."/>
            <person name="Yamashita R."/>
            <person name="Nakai K."/>
            <person name="Yada T."/>
            <person name="Nakamura Y."/>
            <person name="Ohara O."/>
            <person name="Isogai T."/>
            <person name="Sugano S."/>
        </authorList>
    </citation>
    <scope>NUCLEOTIDE SEQUENCE [LARGE SCALE MRNA] (ISOFORM 2)</scope>
    <source>
        <tissue>Mammary gland</tissue>
    </source>
</reference>
<reference key="4">
    <citation type="journal article" date="2003" name="Nature">
        <title>The DNA sequence and analysis of human chromosome 6.</title>
        <authorList>
            <person name="Mungall A.J."/>
            <person name="Palmer S.A."/>
            <person name="Sims S.K."/>
            <person name="Edwards C.A."/>
            <person name="Ashurst J.L."/>
            <person name="Wilming L."/>
            <person name="Jones M.C."/>
            <person name="Horton R."/>
            <person name="Hunt S.E."/>
            <person name="Scott C.E."/>
            <person name="Gilbert J.G.R."/>
            <person name="Clamp M.E."/>
            <person name="Bethel G."/>
            <person name="Milne S."/>
            <person name="Ainscough R."/>
            <person name="Almeida J.P."/>
            <person name="Ambrose K.D."/>
            <person name="Andrews T.D."/>
            <person name="Ashwell R.I.S."/>
            <person name="Babbage A.K."/>
            <person name="Bagguley C.L."/>
            <person name="Bailey J."/>
            <person name="Banerjee R."/>
            <person name="Barker D.J."/>
            <person name="Barlow K.F."/>
            <person name="Bates K."/>
            <person name="Beare D.M."/>
            <person name="Beasley H."/>
            <person name="Beasley O."/>
            <person name="Bird C.P."/>
            <person name="Blakey S.E."/>
            <person name="Bray-Allen S."/>
            <person name="Brook J."/>
            <person name="Brown A.J."/>
            <person name="Brown J.Y."/>
            <person name="Burford D.C."/>
            <person name="Burrill W."/>
            <person name="Burton J."/>
            <person name="Carder C."/>
            <person name="Carter N.P."/>
            <person name="Chapman J.C."/>
            <person name="Clark S.Y."/>
            <person name="Clark G."/>
            <person name="Clee C.M."/>
            <person name="Clegg S."/>
            <person name="Cobley V."/>
            <person name="Collier R.E."/>
            <person name="Collins J.E."/>
            <person name="Colman L.K."/>
            <person name="Corby N.R."/>
            <person name="Coville G.J."/>
            <person name="Culley K.M."/>
            <person name="Dhami P."/>
            <person name="Davies J."/>
            <person name="Dunn M."/>
            <person name="Earthrowl M.E."/>
            <person name="Ellington A.E."/>
            <person name="Evans K.A."/>
            <person name="Faulkner L."/>
            <person name="Francis M.D."/>
            <person name="Frankish A."/>
            <person name="Frankland J."/>
            <person name="French L."/>
            <person name="Garner P."/>
            <person name="Garnett J."/>
            <person name="Ghori M.J."/>
            <person name="Gilby L.M."/>
            <person name="Gillson C.J."/>
            <person name="Glithero R.J."/>
            <person name="Grafham D.V."/>
            <person name="Grant M."/>
            <person name="Gribble S."/>
            <person name="Griffiths C."/>
            <person name="Griffiths M.N.D."/>
            <person name="Hall R."/>
            <person name="Halls K.S."/>
            <person name="Hammond S."/>
            <person name="Harley J.L."/>
            <person name="Hart E.A."/>
            <person name="Heath P.D."/>
            <person name="Heathcott R."/>
            <person name="Holmes S.J."/>
            <person name="Howden P.J."/>
            <person name="Howe K.L."/>
            <person name="Howell G.R."/>
            <person name="Huckle E."/>
            <person name="Humphray S.J."/>
            <person name="Humphries M.D."/>
            <person name="Hunt A.R."/>
            <person name="Johnson C.M."/>
            <person name="Joy A.A."/>
            <person name="Kay M."/>
            <person name="Keenan S.J."/>
            <person name="Kimberley A.M."/>
            <person name="King A."/>
            <person name="Laird G.K."/>
            <person name="Langford C."/>
            <person name="Lawlor S."/>
            <person name="Leongamornlert D.A."/>
            <person name="Leversha M."/>
            <person name="Lloyd C.R."/>
            <person name="Lloyd D.M."/>
            <person name="Loveland J.E."/>
            <person name="Lovell J."/>
            <person name="Martin S."/>
            <person name="Mashreghi-Mohammadi M."/>
            <person name="Maslen G.L."/>
            <person name="Matthews L."/>
            <person name="McCann O.T."/>
            <person name="McLaren S.J."/>
            <person name="McLay K."/>
            <person name="McMurray A."/>
            <person name="Moore M.J.F."/>
            <person name="Mullikin J.C."/>
            <person name="Niblett D."/>
            <person name="Nickerson T."/>
            <person name="Novik K.L."/>
            <person name="Oliver K."/>
            <person name="Overton-Larty E.K."/>
            <person name="Parker A."/>
            <person name="Patel R."/>
            <person name="Pearce A.V."/>
            <person name="Peck A.I."/>
            <person name="Phillimore B.J.C.T."/>
            <person name="Phillips S."/>
            <person name="Plumb R.W."/>
            <person name="Porter K.M."/>
            <person name="Ramsey Y."/>
            <person name="Ranby S.A."/>
            <person name="Rice C.M."/>
            <person name="Ross M.T."/>
            <person name="Searle S.M."/>
            <person name="Sehra H.K."/>
            <person name="Sheridan E."/>
            <person name="Skuce C.D."/>
            <person name="Smith S."/>
            <person name="Smith M."/>
            <person name="Spraggon L."/>
            <person name="Squares S.L."/>
            <person name="Steward C.A."/>
            <person name="Sycamore N."/>
            <person name="Tamlyn-Hall G."/>
            <person name="Tester J."/>
            <person name="Theaker A.J."/>
            <person name="Thomas D.W."/>
            <person name="Thorpe A."/>
            <person name="Tracey A."/>
            <person name="Tromans A."/>
            <person name="Tubby B."/>
            <person name="Wall M."/>
            <person name="Wallis J.M."/>
            <person name="West A.P."/>
            <person name="White S.S."/>
            <person name="Whitehead S.L."/>
            <person name="Whittaker H."/>
            <person name="Wild A."/>
            <person name="Willey D.J."/>
            <person name="Wilmer T.E."/>
            <person name="Wood J.M."/>
            <person name="Wray P.W."/>
            <person name="Wyatt J.C."/>
            <person name="Young L."/>
            <person name="Younger R.M."/>
            <person name="Bentley D.R."/>
            <person name="Coulson A."/>
            <person name="Durbin R.M."/>
            <person name="Hubbard T."/>
            <person name="Sulston J.E."/>
            <person name="Dunham I."/>
            <person name="Rogers J."/>
            <person name="Beck S."/>
        </authorList>
    </citation>
    <scope>NUCLEOTIDE SEQUENCE [LARGE SCALE GENOMIC DNA]</scope>
</reference>
<reference key="5">
    <citation type="journal article" date="2004" name="Genome Res.">
        <title>The status, quality, and expansion of the NIH full-length cDNA project: the Mammalian Gene Collection (MGC).</title>
        <authorList>
            <consortium name="The MGC Project Team"/>
        </authorList>
    </citation>
    <scope>NUCLEOTIDE SEQUENCE [LARGE SCALE MRNA] (ISOFORM 1)</scope>
    <source>
        <tissue>Colon</tissue>
    </source>
</reference>
<reference key="6">
    <citation type="journal article" date="2002" name="Cancer Res.">
        <title>NKX-3.1 interacts with prostate-derived Ets factor and regulates the activity of the PSA promoter.</title>
        <authorList>
            <person name="Chen H."/>
            <person name="Nandi A.K."/>
            <person name="Li X."/>
            <person name="Bieberich C.J."/>
        </authorList>
    </citation>
    <scope>INTERACTION WITH NKX3-1</scope>
</reference>
<reference key="7">
    <citation type="journal article" date="2005" name="Biochemistry">
        <title>Analysis of the 2.0 A crystal structure of the protein-DNA complex of the human PDEF Ets domain bound to the prostate specific antigen regulatory site.</title>
        <authorList>
            <person name="Wang Y."/>
            <person name="Feng L."/>
            <person name="Said M."/>
            <person name="Balderman S."/>
            <person name="Fayazi Z."/>
            <person name="Liu Y."/>
            <person name="Ghosh D."/>
            <person name="Gulick A.M."/>
        </authorList>
    </citation>
    <scope>X-RAY CRYSTALLOGRAPHY (2.0 ANGSTROMS) OF 247-335 IN COMPLEX WITH DNA</scope>
</reference>
<reference key="8">
    <citation type="submission" date="2006-10" db="PDB data bank">
        <title>Solution structure of the SAM_pnt-domain of ETS transcription factor PDEF (prostate Ets).</title>
        <authorList>
            <consortium name="RIKEN structural genomics initiative (RSGI)"/>
        </authorList>
    </citation>
    <scope>STRUCTURE BY NMR OF 131-213</scope>
</reference>
<accession>O95238</accession>
<accession>B4DWH8</accession>
<accession>F5H778</accession>
<gene>
    <name type="primary">SPDEF</name>
    <name type="synonym">PDEF</name>
    <name type="synonym">PSE</name>
</gene>